<gene>
    <name evidence="1" type="primary">rpmG</name>
    <name type="ordered locus">EcE24377A_4137</name>
</gene>
<keyword id="KW-1185">Reference proteome</keyword>
<keyword id="KW-0687">Ribonucleoprotein</keyword>
<keyword id="KW-0689">Ribosomal protein</keyword>
<protein>
    <recommendedName>
        <fullName evidence="1">Large ribosomal subunit protein bL33</fullName>
    </recommendedName>
    <alternativeName>
        <fullName evidence="2">50S ribosomal protein L33</fullName>
    </alternativeName>
</protein>
<sequence>MAKGIREKIKLVSSAGTGHFYTTTKNKRTKPEKLELKKFDPVVRQHVIYKEAKIK</sequence>
<feature type="chain" id="PRO_1000059274" description="Large ribosomal subunit protein bL33">
    <location>
        <begin position="1"/>
        <end position="55"/>
    </location>
</feature>
<proteinExistence type="inferred from homology"/>
<evidence type="ECO:0000255" key="1">
    <source>
        <dbReference type="HAMAP-Rule" id="MF_00294"/>
    </source>
</evidence>
<evidence type="ECO:0000305" key="2"/>
<organism>
    <name type="scientific">Escherichia coli O139:H28 (strain E24377A / ETEC)</name>
    <dbReference type="NCBI Taxonomy" id="331111"/>
    <lineage>
        <taxon>Bacteria</taxon>
        <taxon>Pseudomonadati</taxon>
        <taxon>Pseudomonadota</taxon>
        <taxon>Gammaproteobacteria</taxon>
        <taxon>Enterobacterales</taxon>
        <taxon>Enterobacteriaceae</taxon>
        <taxon>Escherichia</taxon>
    </lineage>
</organism>
<accession>A7ZTI7</accession>
<comment type="similarity">
    <text evidence="1">Belongs to the bacterial ribosomal protein bL33 family.</text>
</comment>
<name>RL33_ECO24</name>
<dbReference type="EMBL" id="CP000800">
    <property type="protein sequence ID" value="ABV17595.1"/>
    <property type="molecule type" value="Genomic_DNA"/>
</dbReference>
<dbReference type="RefSeq" id="WP_001051798.1">
    <property type="nucleotide sequence ID" value="NC_009801.1"/>
</dbReference>
<dbReference type="SMR" id="A7ZTI7"/>
<dbReference type="GeneID" id="97607673"/>
<dbReference type="KEGG" id="ecw:EcE24377A_4137"/>
<dbReference type="HOGENOM" id="CLU_190949_1_1_6"/>
<dbReference type="Proteomes" id="UP000001122">
    <property type="component" value="Chromosome"/>
</dbReference>
<dbReference type="GO" id="GO:0022625">
    <property type="term" value="C:cytosolic large ribosomal subunit"/>
    <property type="evidence" value="ECO:0007669"/>
    <property type="project" value="TreeGrafter"/>
</dbReference>
<dbReference type="GO" id="GO:0003735">
    <property type="term" value="F:structural constituent of ribosome"/>
    <property type="evidence" value="ECO:0007669"/>
    <property type="project" value="InterPro"/>
</dbReference>
<dbReference type="GO" id="GO:0006412">
    <property type="term" value="P:translation"/>
    <property type="evidence" value="ECO:0007669"/>
    <property type="project" value="UniProtKB-UniRule"/>
</dbReference>
<dbReference type="FunFam" id="2.20.28.120:FF:000001">
    <property type="entry name" value="50S ribosomal protein L33"/>
    <property type="match status" value="1"/>
</dbReference>
<dbReference type="Gene3D" id="2.20.28.120">
    <property type="entry name" value="Ribosomal protein L33"/>
    <property type="match status" value="1"/>
</dbReference>
<dbReference type="HAMAP" id="MF_00294">
    <property type="entry name" value="Ribosomal_bL33"/>
    <property type="match status" value="1"/>
</dbReference>
<dbReference type="InterPro" id="IPR001705">
    <property type="entry name" value="Ribosomal_bL33"/>
</dbReference>
<dbReference type="InterPro" id="IPR018264">
    <property type="entry name" value="Ribosomal_bL33_CS"/>
</dbReference>
<dbReference type="InterPro" id="IPR038584">
    <property type="entry name" value="Ribosomal_bL33_sf"/>
</dbReference>
<dbReference type="InterPro" id="IPR011332">
    <property type="entry name" value="Ribosomal_zn-bd"/>
</dbReference>
<dbReference type="NCBIfam" id="NF001860">
    <property type="entry name" value="PRK00595.1"/>
    <property type="match status" value="1"/>
</dbReference>
<dbReference type="NCBIfam" id="TIGR01023">
    <property type="entry name" value="rpmG_bact"/>
    <property type="match status" value="1"/>
</dbReference>
<dbReference type="PANTHER" id="PTHR15238">
    <property type="entry name" value="54S RIBOSOMAL PROTEIN L39, MITOCHONDRIAL"/>
    <property type="match status" value="1"/>
</dbReference>
<dbReference type="PANTHER" id="PTHR15238:SF1">
    <property type="entry name" value="LARGE RIBOSOMAL SUBUNIT PROTEIN BL33M"/>
    <property type="match status" value="1"/>
</dbReference>
<dbReference type="Pfam" id="PF00471">
    <property type="entry name" value="Ribosomal_L33"/>
    <property type="match status" value="1"/>
</dbReference>
<dbReference type="SUPFAM" id="SSF57829">
    <property type="entry name" value="Zn-binding ribosomal proteins"/>
    <property type="match status" value="1"/>
</dbReference>
<dbReference type="PROSITE" id="PS00582">
    <property type="entry name" value="RIBOSOMAL_L33"/>
    <property type="match status" value="1"/>
</dbReference>
<reference key="1">
    <citation type="journal article" date="2008" name="J. Bacteriol.">
        <title>The pangenome structure of Escherichia coli: comparative genomic analysis of E. coli commensal and pathogenic isolates.</title>
        <authorList>
            <person name="Rasko D.A."/>
            <person name="Rosovitz M.J."/>
            <person name="Myers G.S.A."/>
            <person name="Mongodin E.F."/>
            <person name="Fricke W.F."/>
            <person name="Gajer P."/>
            <person name="Crabtree J."/>
            <person name="Sebaihia M."/>
            <person name="Thomson N.R."/>
            <person name="Chaudhuri R."/>
            <person name="Henderson I.R."/>
            <person name="Sperandio V."/>
            <person name="Ravel J."/>
        </authorList>
    </citation>
    <scope>NUCLEOTIDE SEQUENCE [LARGE SCALE GENOMIC DNA]</scope>
    <source>
        <strain>E24377A / ETEC</strain>
    </source>
</reference>